<organism>
    <name type="scientific">Burkholderia cenocepacia (strain HI2424)</name>
    <dbReference type="NCBI Taxonomy" id="331272"/>
    <lineage>
        <taxon>Bacteria</taxon>
        <taxon>Pseudomonadati</taxon>
        <taxon>Pseudomonadota</taxon>
        <taxon>Betaproteobacteria</taxon>
        <taxon>Burkholderiales</taxon>
        <taxon>Burkholderiaceae</taxon>
        <taxon>Burkholderia</taxon>
        <taxon>Burkholderia cepacia complex</taxon>
    </lineage>
</organism>
<evidence type="ECO:0000255" key="1">
    <source>
        <dbReference type="HAMAP-Rule" id="MF_00692"/>
    </source>
</evidence>
<proteinExistence type="inferred from homology"/>
<keyword id="KW-0067">ATP-binding</keyword>
<keyword id="KW-0460">Magnesium</keyword>
<keyword id="KW-0464">Manganese</keyword>
<keyword id="KW-0479">Metal-binding</keyword>
<keyword id="KW-0547">Nucleotide-binding</keyword>
<keyword id="KW-0548">Nucleotidyltransferase</keyword>
<keyword id="KW-0808">Transferase</keyword>
<sequence>MSFSRSAADAADTLPDLAATLGAPAERAFVTLGDAFHTRLPAAPLAAPYVVGFSDDVAQLLDLPPSIAAQPGFAELFAGNPTRDWPAHAMPYASVYSGHQFGVWAGQLGDGRALTIGELPGTDGRRYELQLKGGGRTPYSRMGDGRAVLRSSIREFLCSEAMHHLGIPTTRALTVIGSDQPVVREEIETAAVVTRVSESFVRFGHFEHFFSNDRPDLLRQLADHVIDRFYPACRDADDPYLALLEAATLRTADLVAQWQAVGFCHGVMNTDNMSILGVTIDYGPFGFVDAFDANHICNHSDTSGRYAYRMQPRIAHWNCYCLAQALLPLIGLQHGIADDDARAERAVDDAQAVLAKFPERFGPALERAMRAKLGLELEREGDAELANKLLETMHASHADFTLTFRRLAQISKHDASRDAPVRDLFIDREAFDAWANLYRARLSEETRDDAARAVAMNRANPKYVLRNHLAEVAIRRAKEKDFSEVERLAQILRRPFDEQPEHEAYAALPPDWAGSLEVSCSS</sequence>
<reference key="1">
    <citation type="submission" date="2006-08" db="EMBL/GenBank/DDBJ databases">
        <title>Complete sequence of chromosome 1 of Burkholderia cenocepacia HI2424.</title>
        <authorList>
            <person name="Copeland A."/>
            <person name="Lucas S."/>
            <person name="Lapidus A."/>
            <person name="Barry K."/>
            <person name="Detter J.C."/>
            <person name="Glavina del Rio T."/>
            <person name="Hammon N."/>
            <person name="Israni S."/>
            <person name="Pitluck S."/>
            <person name="Chain P."/>
            <person name="Malfatti S."/>
            <person name="Shin M."/>
            <person name="Vergez L."/>
            <person name="Schmutz J."/>
            <person name="Larimer F."/>
            <person name="Land M."/>
            <person name="Hauser L."/>
            <person name="Kyrpides N."/>
            <person name="Kim E."/>
            <person name="LiPuma J.J."/>
            <person name="Gonzalez C.F."/>
            <person name="Konstantinidis K."/>
            <person name="Tiedje J.M."/>
            <person name="Richardson P."/>
        </authorList>
    </citation>
    <scope>NUCLEOTIDE SEQUENCE [LARGE SCALE GENOMIC DNA]</scope>
    <source>
        <strain>HI2424</strain>
    </source>
</reference>
<feature type="chain" id="PRO_1000045241" description="Protein nucleotidyltransferase YdiU">
    <location>
        <begin position="1"/>
        <end position="522"/>
    </location>
</feature>
<feature type="active site" description="Proton acceptor" evidence="1">
    <location>
        <position position="271"/>
    </location>
</feature>
<feature type="binding site" evidence="1">
    <location>
        <position position="109"/>
    </location>
    <ligand>
        <name>ATP</name>
        <dbReference type="ChEBI" id="CHEBI:30616"/>
    </ligand>
</feature>
<feature type="binding site" evidence="1">
    <location>
        <position position="111"/>
    </location>
    <ligand>
        <name>ATP</name>
        <dbReference type="ChEBI" id="CHEBI:30616"/>
    </ligand>
</feature>
<feature type="binding site" evidence="1">
    <location>
        <position position="112"/>
    </location>
    <ligand>
        <name>ATP</name>
        <dbReference type="ChEBI" id="CHEBI:30616"/>
    </ligand>
</feature>
<feature type="binding site" evidence="1">
    <location>
        <position position="132"/>
    </location>
    <ligand>
        <name>ATP</name>
        <dbReference type="ChEBI" id="CHEBI:30616"/>
    </ligand>
</feature>
<feature type="binding site" evidence="1">
    <location>
        <position position="144"/>
    </location>
    <ligand>
        <name>ATP</name>
        <dbReference type="ChEBI" id="CHEBI:30616"/>
    </ligand>
</feature>
<feature type="binding site" evidence="1">
    <location>
        <position position="145"/>
    </location>
    <ligand>
        <name>ATP</name>
        <dbReference type="ChEBI" id="CHEBI:30616"/>
    </ligand>
</feature>
<feature type="binding site" evidence="1">
    <location>
        <position position="195"/>
    </location>
    <ligand>
        <name>ATP</name>
        <dbReference type="ChEBI" id="CHEBI:30616"/>
    </ligand>
</feature>
<feature type="binding site" evidence="1">
    <location>
        <position position="202"/>
    </location>
    <ligand>
        <name>ATP</name>
        <dbReference type="ChEBI" id="CHEBI:30616"/>
    </ligand>
</feature>
<feature type="binding site" evidence="1">
    <location>
        <position position="272"/>
    </location>
    <ligand>
        <name>Mg(2+)</name>
        <dbReference type="ChEBI" id="CHEBI:18420"/>
    </ligand>
</feature>
<feature type="binding site" evidence="1">
    <location>
        <position position="281"/>
    </location>
    <ligand>
        <name>ATP</name>
        <dbReference type="ChEBI" id="CHEBI:30616"/>
    </ligand>
</feature>
<feature type="binding site" evidence="1">
    <location>
        <position position="281"/>
    </location>
    <ligand>
        <name>Mg(2+)</name>
        <dbReference type="ChEBI" id="CHEBI:18420"/>
    </ligand>
</feature>
<comment type="function">
    <text evidence="1">Nucleotidyltransferase involved in the post-translational modification of proteins. It can catalyze the addition of adenosine monophosphate (AMP) or uridine monophosphate (UMP) to a protein, resulting in modifications known as AMPylation and UMPylation.</text>
</comment>
<comment type="catalytic activity">
    <reaction evidence="1">
        <text>L-seryl-[protein] + ATP = 3-O-(5'-adenylyl)-L-seryl-[protein] + diphosphate</text>
        <dbReference type="Rhea" id="RHEA:58120"/>
        <dbReference type="Rhea" id="RHEA-COMP:9863"/>
        <dbReference type="Rhea" id="RHEA-COMP:15073"/>
        <dbReference type="ChEBI" id="CHEBI:29999"/>
        <dbReference type="ChEBI" id="CHEBI:30616"/>
        <dbReference type="ChEBI" id="CHEBI:33019"/>
        <dbReference type="ChEBI" id="CHEBI:142516"/>
        <dbReference type="EC" id="2.7.7.108"/>
    </reaction>
</comment>
<comment type="catalytic activity">
    <reaction evidence="1">
        <text>L-threonyl-[protein] + ATP = 3-O-(5'-adenylyl)-L-threonyl-[protein] + diphosphate</text>
        <dbReference type="Rhea" id="RHEA:54292"/>
        <dbReference type="Rhea" id="RHEA-COMP:11060"/>
        <dbReference type="Rhea" id="RHEA-COMP:13847"/>
        <dbReference type="ChEBI" id="CHEBI:30013"/>
        <dbReference type="ChEBI" id="CHEBI:30616"/>
        <dbReference type="ChEBI" id="CHEBI:33019"/>
        <dbReference type="ChEBI" id="CHEBI:138113"/>
        <dbReference type="EC" id="2.7.7.108"/>
    </reaction>
</comment>
<comment type="catalytic activity">
    <reaction evidence="1">
        <text>L-tyrosyl-[protein] + ATP = O-(5'-adenylyl)-L-tyrosyl-[protein] + diphosphate</text>
        <dbReference type="Rhea" id="RHEA:54288"/>
        <dbReference type="Rhea" id="RHEA-COMP:10136"/>
        <dbReference type="Rhea" id="RHEA-COMP:13846"/>
        <dbReference type="ChEBI" id="CHEBI:30616"/>
        <dbReference type="ChEBI" id="CHEBI:33019"/>
        <dbReference type="ChEBI" id="CHEBI:46858"/>
        <dbReference type="ChEBI" id="CHEBI:83624"/>
        <dbReference type="EC" id="2.7.7.108"/>
    </reaction>
</comment>
<comment type="catalytic activity">
    <reaction evidence="1">
        <text>L-histidyl-[protein] + UTP = N(tele)-(5'-uridylyl)-L-histidyl-[protein] + diphosphate</text>
        <dbReference type="Rhea" id="RHEA:83891"/>
        <dbReference type="Rhea" id="RHEA-COMP:9745"/>
        <dbReference type="Rhea" id="RHEA-COMP:20239"/>
        <dbReference type="ChEBI" id="CHEBI:29979"/>
        <dbReference type="ChEBI" id="CHEBI:33019"/>
        <dbReference type="ChEBI" id="CHEBI:46398"/>
        <dbReference type="ChEBI" id="CHEBI:233474"/>
    </reaction>
</comment>
<comment type="catalytic activity">
    <reaction evidence="1">
        <text>L-seryl-[protein] + UTP = O-(5'-uridylyl)-L-seryl-[protein] + diphosphate</text>
        <dbReference type="Rhea" id="RHEA:64604"/>
        <dbReference type="Rhea" id="RHEA-COMP:9863"/>
        <dbReference type="Rhea" id="RHEA-COMP:16635"/>
        <dbReference type="ChEBI" id="CHEBI:29999"/>
        <dbReference type="ChEBI" id="CHEBI:33019"/>
        <dbReference type="ChEBI" id="CHEBI:46398"/>
        <dbReference type="ChEBI" id="CHEBI:156051"/>
    </reaction>
</comment>
<comment type="catalytic activity">
    <reaction evidence="1">
        <text>L-tyrosyl-[protein] + UTP = O-(5'-uridylyl)-L-tyrosyl-[protein] + diphosphate</text>
        <dbReference type="Rhea" id="RHEA:83887"/>
        <dbReference type="Rhea" id="RHEA-COMP:10136"/>
        <dbReference type="Rhea" id="RHEA-COMP:20238"/>
        <dbReference type="ChEBI" id="CHEBI:33019"/>
        <dbReference type="ChEBI" id="CHEBI:46398"/>
        <dbReference type="ChEBI" id="CHEBI:46858"/>
        <dbReference type="ChEBI" id="CHEBI:90602"/>
    </reaction>
</comment>
<comment type="cofactor">
    <cofactor evidence="1">
        <name>Mg(2+)</name>
        <dbReference type="ChEBI" id="CHEBI:18420"/>
    </cofactor>
    <cofactor evidence="1">
        <name>Mn(2+)</name>
        <dbReference type="ChEBI" id="CHEBI:29035"/>
    </cofactor>
</comment>
<comment type="similarity">
    <text evidence="1">Belongs to the SELO family.</text>
</comment>
<gene>
    <name evidence="1" type="primary">ydiU</name>
    <name evidence="1" type="synonym">selO</name>
    <name type="ordered locus">Bcen2424_1908</name>
</gene>
<dbReference type="EC" id="2.7.7.-" evidence="1"/>
<dbReference type="EC" id="2.7.7.108" evidence="1"/>
<dbReference type="EMBL" id="CP000458">
    <property type="protein sequence ID" value="ABK08659.1"/>
    <property type="molecule type" value="Genomic_DNA"/>
</dbReference>
<dbReference type="RefSeq" id="WP_011549621.1">
    <property type="nucleotide sequence ID" value="NC_008542.1"/>
</dbReference>
<dbReference type="SMR" id="A0K832"/>
<dbReference type="KEGG" id="bch:Bcen2424_1908"/>
<dbReference type="HOGENOM" id="CLU_010245_4_0_4"/>
<dbReference type="GO" id="GO:0070733">
    <property type="term" value="F:AMPylase activity"/>
    <property type="evidence" value="ECO:0007669"/>
    <property type="project" value="TreeGrafter"/>
</dbReference>
<dbReference type="GO" id="GO:0005524">
    <property type="term" value="F:ATP binding"/>
    <property type="evidence" value="ECO:0007669"/>
    <property type="project" value="UniProtKB-UniRule"/>
</dbReference>
<dbReference type="GO" id="GO:0000287">
    <property type="term" value="F:magnesium ion binding"/>
    <property type="evidence" value="ECO:0007669"/>
    <property type="project" value="UniProtKB-UniRule"/>
</dbReference>
<dbReference type="HAMAP" id="MF_00692">
    <property type="entry name" value="YdiU_SelO"/>
    <property type="match status" value="1"/>
</dbReference>
<dbReference type="InterPro" id="IPR003846">
    <property type="entry name" value="SelO"/>
</dbReference>
<dbReference type="NCBIfam" id="NF000658">
    <property type="entry name" value="PRK00029.1"/>
    <property type="match status" value="1"/>
</dbReference>
<dbReference type="PANTHER" id="PTHR32057">
    <property type="entry name" value="PROTEIN ADENYLYLTRANSFERASE SELO, MITOCHONDRIAL"/>
    <property type="match status" value="1"/>
</dbReference>
<dbReference type="PANTHER" id="PTHR32057:SF14">
    <property type="entry name" value="PROTEIN ADENYLYLTRANSFERASE SELO, MITOCHONDRIAL"/>
    <property type="match status" value="1"/>
</dbReference>
<dbReference type="Pfam" id="PF02696">
    <property type="entry name" value="SelO"/>
    <property type="match status" value="1"/>
</dbReference>
<accession>A0K832</accession>
<name>SELO_BURCH</name>
<protein>
    <recommendedName>
        <fullName evidence="1">Protein nucleotidyltransferase YdiU</fullName>
        <ecNumber evidence="1">2.7.7.-</ecNumber>
    </recommendedName>
    <alternativeName>
        <fullName evidence="1">Protein adenylyltransferase YdiU</fullName>
        <ecNumber evidence="1">2.7.7.108</ecNumber>
    </alternativeName>
    <alternativeName>
        <fullName evidence="1">Protein uridylyltransferase YdiU</fullName>
        <ecNumber evidence="1">2.7.7.-</ecNumber>
    </alternativeName>
</protein>